<accession>Q2YM16</accession>
<comment type="function">
    <text evidence="1">DNA-dependent RNA polymerase catalyzes the transcription of DNA into RNA using the four ribonucleoside triphosphates as substrates.</text>
</comment>
<comment type="catalytic activity">
    <reaction evidence="1">
        <text>RNA(n) + a ribonucleoside 5'-triphosphate = RNA(n+1) + diphosphate</text>
        <dbReference type="Rhea" id="RHEA:21248"/>
        <dbReference type="Rhea" id="RHEA-COMP:14527"/>
        <dbReference type="Rhea" id="RHEA-COMP:17342"/>
        <dbReference type="ChEBI" id="CHEBI:33019"/>
        <dbReference type="ChEBI" id="CHEBI:61557"/>
        <dbReference type="ChEBI" id="CHEBI:140395"/>
        <dbReference type="EC" id="2.7.7.6"/>
    </reaction>
</comment>
<comment type="cofactor">
    <cofactor evidence="1">
        <name>Mg(2+)</name>
        <dbReference type="ChEBI" id="CHEBI:18420"/>
    </cofactor>
    <text evidence="1">Binds 1 Mg(2+) ion per subunit.</text>
</comment>
<comment type="cofactor">
    <cofactor evidence="1">
        <name>Zn(2+)</name>
        <dbReference type="ChEBI" id="CHEBI:29105"/>
    </cofactor>
    <text evidence="1">Binds 2 Zn(2+) ions per subunit.</text>
</comment>
<comment type="subunit">
    <text evidence="1">The RNAP catalytic core consists of 2 alpha, 1 beta, 1 beta' and 1 omega subunit. When a sigma factor is associated with the core the holoenzyme is formed, which can initiate transcription.</text>
</comment>
<comment type="similarity">
    <text evidence="1">Belongs to the RNA polymerase beta' chain family.</text>
</comment>
<dbReference type="EC" id="2.7.7.6" evidence="1"/>
<dbReference type="EMBL" id="AM040264">
    <property type="protein sequence ID" value="CAJ11219.1"/>
    <property type="molecule type" value="Genomic_DNA"/>
</dbReference>
<dbReference type="RefSeq" id="WP_002964369.1">
    <property type="nucleotide sequence ID" value="NZ_KN046823.1"/>
</dbReference>
<dbReference type="SMR" id="Q2YM16"/>
<dbReference type="STRING" id="359391.BAB1_1263"/>
<dbReference type="GeneID" id="93016433"/>
<dbReference type="KEGG" id="bmf:BAB1_1263"/>
<dbReference type="PATRIC" id="fig|359391.11.peg.163"/>
<dbReference type="HOGENOM" id="CLU_000524_3_1_5"/>
<dbReference type="PhylomeDB" id="Q2YM16"/>
<dbReference type="Proteomes" id="UP000002719">
    <property type="component" value="Chromosome I"/>
</dbReference>
<dbReference type="GO" id="GO:0000428">
    <property type="term" value="C:DNA-directed RNA polymerase complex"/>
    <property type="evidence" value="ECO:0007669"/>
    <property type="project" value="UniProtKB-KW"/>
</dbReference>
<dbReference type="GO" id="GO:0003677">
    <property type="term" value="F:DNA binding"/>
    <property type="evidence" value="ECO:0007669"/>
    <property type="project" value="UniProtKB-UniRule"/>
</dbReference>
<dbReference type="GO" id="GO:0003899">
    <property type="term" value="F:DNA-directed RNA polymerase activity"/>
    <property type="evidence" value="ECO:0007669"/>
    <property type="project" value="UniProtKB-UniRule"/>
</dbReference>
<dbReference type="GO" id="GO:0000287">
    <property type="term" value="F:magnesium ion binding"/>
    <property type="evidence" value="ECO:0007669"/>
    <property type="project" value="UniProtKB-UniRule"/>
</dbReference>
<dbReference type="GO" id="GO:0008270">
    <property type="term" value="F:zinc ion binding"/>
    <property type="evidence" value="ECO:0007669"/>
    <property type="project" value="UniProtKB-UniRule"/>
</dbReference>
<dbReference type="GO" id="GO:0006351">
    <property type="term" value="P:DNA-templated transcription"/>
    <property type="evidence" value="ECO:0007669"/>
    <property type="project" value="UniProtKB-UniRule"/>
</dbReference>
<dbReference type="CDD" id="cd02655">
    <property type="entry name" value="RNAP_beta'_C"/>
    <property type="match status" value="1"/>
</dbReference>
<dbReference type="CDD" id="cd01609">
    <property type="entry name" value="RNAP_beta'_N"/>
    <property type="match status" value="1"/>
</dbReference>
<dbReference type="FunFam" id="4.10.860.120:FF:000001">
    <property type="entry name" value="DNA-directed RNA polymerase subunit beta"/>
    <property type="match status" value="1"/>
</dbReference>
<dbReference type="Gene3D" id="1.10.132.30">
    <property type="match status" value="1"/>
</dbReference>
<dbReference type="Gene3D" id="1.10.150.390">
    <property type="match status" value="1"/>
</dbReference>
<dbReference type="Gene3D" id="1.10.1790.20">
    <property type="match status" value="1"/>
</dbReference>
<dbReference type="Gene3D" id="1.10.40.90">
    <property type="match status" value="1"/>
</dbReference>
<dbReference type="Gene3D" id="2.40.40.20">
    <property type="match status" value="1"/>
</dbReference>
<dbReference type="Gene3D" id="2.40.50.100">
    <property type="match status" value="3"/>
</dbReference>
<dbReference type="Gene3D" id="4.10.860.120">
    <property type="entry name" value="RNA polymerase II, clamp domain"/>
    <property type="match status" value="1"/>
</dbReference>
<dbReference type="Gene3D" id="1.10.274.100">
    <property type="entry name" value="RNA polymerase Rpb1, domain 3"/>
    <property type="match status" value="2"/>
</dbReference>
<dbReference type="HAMAP" id="MF_01322">
    <property type="entry name" value="RNApol_bact_RpoC"/>
    <property type="match status" value="1"/>
</dbReference>
<dbReference type="InterPro" id="IPR045867">
    <property type="entry name" value="DNA-dir_RpoC_beta_prime"/>
</dbReference>
<dbReference type="InterPro" id="IPR012754">
    <property type="entry name" value="DNA-dir_RpoC_beta_prime_bact"/>
</dbReference>
<dbReference type="InterPro" id="IPR000722">
    <property type="entry name" value="RNA_pol_asu"/>
</dbReference>
<dbReference type="InterPro" id="IPR006592">
    <property type="entry name" value="RNA_pol_N"/>
</dbReference>
<dbReference type="InterPro" id="IPR007080">
    <property type="entry name" value="RNA_pol_Rpb1_1"/>
</dbReference>
<dbReference type="InterPro" id="IPR007066">
    <property type="entry name" value="RNA_pol_Rpb1_3"/>
</dbReference>
<dbReference type="InterPro" id="IPR042102">
    <property type="entry name" value="RNA_pol_Rpb1_3_sf"/>
</dbReference>
<dbReference type="InterPro" id="IPR007083">
    <property type="entry name" value="RNA_pol_Rpb1_4"/>
</dbReference>
<dbReference type="InterPro" id="IPR007081">
    <property type="entry name" value="RNA_pol_Rpb1_5"/>
</dbReference>
<dbReference type="InterPro" id="IPR044893">
    <property type="entry name" value="RNA_pol_Rpb1_clamp_domain"/>
</dbReference>
<dbReference type="InterPro" id="IPR038120">
    <property type="entry name" value="Rpb1_funnel_sf"/>
</dbReference>
<dbReference type="NCBIfam" id="TIGR02386">
    <property type="entry name" value="rpoC_TIGR"/>
    <property type="match status" value="1"/>
</dbReference>
<dbReference type="PANTHER" id="PTHR19376">
    <property type="entry name" value="DNA-DIRECTED RNA POLYMERASE"/>
    <property type="match status" value="1"/>
</dbReference>
<dbReference type="PANTHER" id="PTHR19376:SF54">
    <property type="entry name" value="DNA-DIRECTED RNA POLYMERASE SUBUNIT BETA"/>
    <property type="match status" value="1"/>
</dbReference>
<dbReference type="Pfam" id="PF04997">
    <property type="entry name" value="RNA_pol_Rpb1_1"/>
    <property type="match status" value="1"/>
</dbReference>
<dbReference type="Pfam" id="PF00623">
    <property type="entry name" value="RNA_pol_Rpb1_2"/>
    <property type="match status" value="1"/>
</dbReference>
<dbReference type="Pfam" id="PF04983">
    <property type="entry name" value="RNA_pol_Rpb1_3"/>
    <property type="match status" value="1"/>
</dbReference>
<dbReference type="Pfam" id="PF05000">
    <property type="entry name" value="RNA_pol_Rpb1_4"/>
    <property type="match status" value="1"/>
</dbReference>
<dbReference type="Pfam" id="PF04998">
    <property type="entry name" value="RNA_pol_Rpb1_5"/>
    <property type="match status" value="1"/>
</dbReference>
<dbReference type="SMART" id="SM00663">
    <property type="entry name" value="RPOLA_N"/>
    <property type="match status" value="1"/>
</dbReference>
<dbReference type="SUPFAM" id="SSF64484">
    <property type="entry name" value="beta and beta-prime subunits of DNA dependent RNA-polymerase"/>
    <property type="match status" value="1"/>
</dbReference>
<name>RPOC_BRUA2</name>
<sequence length="1400" mass="155641">MNQEVMNLFNPQAPAQTFDSIRISIASPEKILSWSYGEIKKPETINYRTFKPERDGLFCARIFGPIKDYECLCGKYKRMKYKGIICEKCGVEVTLSRVRRERMGHIELAAPVAHIWFLKSLPSRIGTLLDMTLKDIERILYFENYIVTEPGLTSLKEHQLLSEEEYMIAVDEFGEDQFTALIGAEAIYELLASMELEKIAADLRVDLAETTSDLKQKKLMKRLKIVENFLESGNRPEWMIMKIVPVIPPDLRPLVPLDGGRFATSDLNDLYRRVINRNNRLKRLIELRAPGIIIRNEKRMLQEAVDALFDNGRRGRVITGANKRPLKSLSDMLKGKQGRFRQNLLGKRVDYSGRSVIVTGPELKLHQCGLPKKMALELFKPFIYARLDAKGYSSTVKQAKKLVEKERPEVWDILDEVIREHPVLLNRAPTLHRLGIQAFEPTLIEGKAIQLHPLVCTAFNADFDGDQMAVHVPLSLEAQLEARVLMMSTNNILHPANGAPIIVPSQDMVLGLYYLSIVAEKEPGEGMIFADMGELQHALENKVVTLHTKIKGRFKTVDAEGNPVLKIYDTTPGRMIMGELLPKNVNVPFDICNQEMTKKNISKMIDHVYRHCGQKETVIFCDRIMQLGFAHACRAGISFGKDDMVIPESKAKIVAETEALTTEYEQQYNDGLITQGEKYNKVVDAWGKATDKITEEMMARLKAVEFDPVTGRQKQMNSVYMMSHSGARGSVNQMRQLGGMRGLMAKPSGEIIETPIISNFKEGLTVNEYFNSTHGARKGLADTALKTANSGYLTRRLVDVAQDAIISEVDCGAEIGLTMQPIVDAGQIVASIGQRVLGRTALDPILHPVTGEVIVEAGRMIEEKDVEIIEKAGIQSIRIRSALTCETRNGVCAKCYGRDLARGTPVNQGEAVGVIAAQSIGEPGTQLTMRTFHLGGTAQVVDSSYLEASYEGTVKLRNRNVVRNSDGNLVVMGRNMAVLILDATGKERAVHRVTYGSRLFVDEGDTVKRGQRIAEWDPYTRPIMTEVEGYVEFEDLVDGLSVSETADESTGITKRVVIDWRSTPRGSDLKPAMVIKDKAGKILKLSKGGDARFLLSVESILSVEPGAHVKAGDVIARLPMESAKTKDITGGLPRVAELFEARRPKDHAIIAEIDGTVRFGRDYKNKRRIIIEPNDDTIEPVEYLIPKGKPFHLQDGDVIEKGEYILDGNPAPHDILAIKGVEALASYLVNEIQEVYRLQGVLINDKHIEVIVRQMLQKVEITESGDTGYIPGDHVDRIELEEINERLIEEGKKPGSGNPVLLGITKASLQTPSFISAASFQETTRVLTEAAVAGKMDTLQGLKENVIVGRLIPAGTGGMTNQIRRIATARDELIIDERRKTSGSAEANAMLVDMTNNAAE</sequence>
<evidence type="ECO:0000255" key="1">
    <source>
        <dbReference type="HAMAP-Rule" id="MF_01322"/>
    </source>
</evidence>
<keyword id="KW-0240">DNA-directed RNA polymerase</keyword>
<keyword id="KW-0460">Magnesium</keyword>
<keyword id="KW-0479">Metal-binding</keyword>
<keyword id="KW-0548">Nucleotidyltransferase</keyword>
<keyword id="KW-1185">Reference proteome</keyword>
<keyword id="KW-0804">Transcription</keyword>
<keyword id="KW-0808">Transferase</keyword>
<keyword id="KW-0862">Zinc</keyword>
<proteinExistence type="inferred from homology"/>
<gene>
    <name evidence="1" type="primary">rpoC</name>
    <name type="ordered locus">BAB1_1263</name>
</gene>
<feature type="chain" id="PRO_0000240798" description="DNA-directed RNA polymerase subunit beta'">
    <location>
        <begin position="1"/>
        <end position="1400"/>
    </location>
</feature>
<feature type="binding site" evidence="1">
    <location>
        <position position="71"/>
    </location>
    <ligand>
        <name>Zn(2+)</name>
        <dbReference type="ChEBI" id="CHEBI:29105"/>
        <label>1</label>
    </ligand>
</feature>
<feature type="binding site" evidence="1">
    <location>
        <position position="73"/>
    </location>
    <ligand>
        <name>Zn(2+)</name>
        <dbReference type="ChEBI" id="CHEBI:29105"/>
        <label>1</label>
    </ligand>
</feature>
<feature type="binding site" evidence="1">
    <location>
        <position position="86"/>
    </location>
    <ligand>
        <name>Zn(2+)</name>
        <dbReference type="ChEBI" id="CHEBI:29105"/>
        <label>1</label>
    </ligand>
</feature>
<feature type="binding site" evidence="1">
    <location>
        <position position="89"/>
    </location>
    <ligand>
        <name>Zn(2+)</name>
        <dbReference type="ChEBI" id="CHEBI:29105"/>
        <label>1</label>
    </ligand>
</feature>
<feature type="binding site" evidence="1">
    <location>
        <position position="462"/>
    </location>
    <ligand>
        <name>Mg(2+)</name>
        <dbReference type="ChEBI" id="CHEBI:18420"/>
    </ligand>
</feature>
<feature type="binding site" evidence="1">
    <location>
        <position position="464"/>
    </location>
    <ligand>
        <name>Mg(2+)</name>
        <dbReference type="ChEBI" id="CHEBI:18420"/>
    </ligand>
</feature>
<feature type="binding site" evidence="1">
    <location>
        <position position="466"/>
    </location>
    <ligand>
        <name>Mg(2+)</name>
        <dbReference type="ChEBI" id="CHEBI:18420"/>
    </ligand>
</feature>
<feature type="binding site" evidence="1">
    <location>
        <position position="811"/>
    </location>
    <ligand>
        <name>Zn(2+)</name>
        <dbReference type="ChEBI" id="CHEBI:29105"/>
        <label>2</label>
    </ligand>
</feature>
<feature type="binding site" evidence="1">
    <location>
        <position position="885"/>
    </location>
    <ligand>
        <name>Zn(2+)</name>
        <dbReference type="ChEBI" id="CHEBI:29105"/>
        <label>2</label>
    </ligand>
</feature>
<feature type="binding site" evidence="1">
    <location>
        <position position="892"/>
    </location>
    <ligand>
        <name>Zn(2+)</name>
        <dbReference type="ChEBI" id="CHEBI:29105"/>
        <label>2</label>
    </ligand>
</feature>
<feature type="binding site" evidence="1">
    <location>
        <position position="895"/>
    </location>
    <ligand>
        <name>Zn(2+)</name>
        <dbReference type="ChEBI" id="CHEBI:29105"/>
        <label>2</label>
    </ligand>
</feature>
<organism>
    <name type="scientific">Brucella abortus (strain 2308)</name>
    <dbReference type="NCBI Taxonomy" id="359391"/>
    <lineage>
        <taxon>Bacteria</taxon>
        <taxon>Pseudomonadati</taxon>
        <taxon>Pseudomonadota</taxon>
        <taxon>Alphaproteobacteria</taxon>
        <taxon>Hyphomicrobiales</taxon>
        <taxon>Brucellaceae</taxon>
        <taxon>Brucella/Ochrobactrum group</taxon>
        <taxon>Brucella</taxon>
    </lineage>
</organism>
<reference key="1">
    <citation type="journal article" date="2005" name="Infect. Immun.">
        <title>Whole-genome analyses of speciation events in pathogenic Brucellae.</title>
        <authorList>
            <person name="Chain P.S."/>
            <person name="Comerci D.J."/>
            <person name="Tolmasky M.E."/>
            <person name="Larimer F.W."/>
            <person name="Malfatti S.A."/>
            <person name="Vergez L.M."/>
            <person name="Aguero F."/>
            <person name="Land M.L."/>
            <person name="Ugalde R.A."/>
            <person name="Garcia E."/>
        </authorList>
    </citation>
    <scope>NUCLEOTIDE SEQUENCE [LARGE SCALE GENOMIC DNA]</scope>
    <source>
        <strain>2308</strain>
    </source>
</reference>
<protein>
    <recommendedName>
        <fullName evidence="1">DNA-directed RNA polymerase subunit beta'</fullName>
        <shortName evidence="1">RNAP subunit beta'</shortName>
        <ecNumber evidence="1">2.7.7.6</ecNumber>
    </recommendedName>
    <alternativeName>
        <fullName evidence="1">RNA polymerase subunit beta'</fullName>
    </alternativeName>
    <alternativeName>
        <fullName evidence="1">Transcriptase subunit beta'</fullName>
    </alternativeName>
</protein>